<keyword id="KW-0050">Antiport</keyword>
<keyword id="KW-0997">Cell inner membrane</keyword>
<keyword id="KW-1003">Cell membrane</keyword>
<keyword id="KW-0406">Ion transport</keyword>
<keyword id="KW-0472">Membrane</keyword>
<keyword id="KW-1185">Reference proteome</keyword>
<keyword id="KW-0915">Sodium</keyword>
<keyword id="KW-0739">Sodium transport</keyword>
<keyword id="KW-0812">Transmembrane</keyword>
<keyword id="KW-1133">Transmembrane helix</keyword>
<keyword id="KW-0813">Transport</keyword>
<evidence type="ECO:0000255" key="1">
    <source>
        <dbReference type="HAMAP-Rule" id="MF_01844"/>
    </source>
</evidence>
<feature type="chain" id="PRO_0000334384" description="Na(+)/H(+) antiporter NhaA 1">
    <location>
        <begin position="1"/>
        <end position="439"/>
    </location>
</feature>
<feature type="transmembrane region" description="Helical" evidence="1">
    <location>
        <begin position="14"/>
        <end position="34"/>
    </location>
</feature>
<feature type="transmembrane region" description="Helical" evidence="1">
    <location>
        <begin position="60"/>
        <end position="80"/>
    </location>
</feature>
<feature type="transmembrane region" description="Helical" evidence="1">
    <location>
        <begin position="98"/>
        <end position="118"/>
    </location>
</feature>
<feature type="transmembrane region" description="Helical" evidence="1">
    <location>
        <begin position="127"/>
        <end position="147"/>
    </location>
</feature>
<feature type="transmembrane region" description="Helical" evidence="1">
    <location>
        <begin position="156"/>
        <end position="176"/>
    </location>
</feature>
<feature type="transmembrane region" description="Helical" evidence="1">
    <location>
        <begin position="179"/>
        <end position="199"/>
    </location>
</feature>
<feature type="transmembrane region" description="Helical" evidence="1">
    <location>
        <begin position="213"/>
        <end position="233"/>
    </location>
</feature>
<feature type="transmembrane region" description="Helical" evidence="1">
    <location>
        <begin position="303"/>
        <end position="323"/>
    </location>
</feature>
<feature type="transmembrane region" description="Helical" evidence="1">
    <location>
        <begin position="335"/>
        <end position="355"/>
    </location>
</feature>
<feature type="transmembrane region" description="Helical" evidence="1">
    <location>
        <begin position="375"/>
        <end position="395"/>
    </location>
</feature>
<feature type="transmembrane region" description="Helical" evidence="1">
    <location>
        <begin position="408"/>
        <end position="428"/>
    </location>
</feature>
<sequence>MSSRGKWSWLHSPITGGILLIIAATTALFWANLAPSLYHHAWHDALFSVSSGFSATIYSISLHQIVNEFLMAIFFFFIGLEMKRELLDDDLSTLKKAALPLFSALGGVVLPASIYYFFNAGTDTVNGWGIPMATDIAFALGVLAMVGSRVPLSLKIFLSALAIGDDLMAVLVIAIFYTEQIFVNELLVGFLGLIVLAVANKMGVRNRLVYYSIGLIIVWISFLASGVHATIAGVAVAFTIPSRREISMGNYLITAKGLLSGLDKERHNKADVLTKNAISSLREIRDLSYQASNPLQLKEEALHPISALFIVPLFALGNAGVIVDDSMLAELTNPIVLGIAAGLIIGKPLGIFLFAKLLTLLKLGQLPEGVTWRHIIGTGFLAGMGFTMSLFISDLAFSEPEQKIVAKVAVLLASIISGIVGYLILISAPVIKKDNKLNS</sequence>
<reference key="1">
    <citation type="journal article" date="2008" name="BMC Genomics">
        <title>Genomics of an extreme psychrophile, Psychromonas ingrahamii.</title>
        <authorList>
            <person name="Riley M."/>
            <person name="Staley J.T."/>
            <person name="Danchin A."/>
            <person name="Wang T.Z."/>
            <person name="Brettin T.S."/>
            <person name="Hauser L.J."/>
            <person name="Land M.L."/>
            <person name="Thompson L.S."/>
        </authorList>
    </citation>
    <scope>NUCLEOTIDE SEQUENCE [LARGE SCALE GENOMIC DNA]</scope>
    <source>
        <strain>DSM 17664 / CCUG 51855 / 37</strain>
    </source>
</reference>
<comment type="function">
    <text evidence="1">Na(+)/H(+) antiporter that extrudes sodium in exchange for external protons.</text>
</comment>
<comment type="catalytic activity">
    <reaction evidence="1">
        <text>Na(+)(in) + 2 H(+)(out) = Na(+)(out) + 2 H(+)(in)</text>
        <dbReference type="Rhea" id="RHEA:29251"/>
        <dbReference type="ChEBI" id="CHEBI:15378"/>
        <dbReference type="ChEBI" id="CHEBI:29101"/>
    </reaction>
    <physiologicalReaction direction="left-to-right" evidence="1">
        <dbReference type="Rhea" id="RHEA:29252"/>
    </physiologicalReaction>
</comment>
<comment type="subcellular location">
    <subcellularLocation>
        <location evidence="1">Cell inner membrane</location>
        <topology evidence="1">Multi-pass membrane protein</topology>
    </subcellularLocation>
</comment>
<comment type="similarity">
    <text evidence="1">Belongs to the NhaA Na(+)/H(+) (TC 2.A.33) antiporter family.</text>
</comment>
<organism>
    <name type="scientific">Psychromonas ingrahamii (strain DSM 17664 / CCUG 51855 / 37)</name>
    <dbReference type="NCBI Taxonomy" id="357804"/>
    <lineage>
        <taxon>Bacteria</taxon>
        <taxon>Pseudomonadati</taxon>
        <taxon>Pseudomonadota</taxon>
        <taxon>Gammaproteobacteria</taxon>
        <taxon>Alteromonadales</taxon>
        <taxon>Psychromonadaceae</taxon>
        <taxon>Psychromonas</taxon>
    </lineage>
</organism>
<proteinExistence type="inferred from homology"/>
<dbReference type="EMBL" id="CP000510">
    <property type="protein sequence ID" value="ABM02081.1"/>
    <property type="molecule type" value="Genomic_DNA"/>
</dbReference>
<dbReference type="RefSeq" id="WP_011768640.1">
    <property type="nucleotide sequence ID" value="NC_008709.1"/>
</dbReference>
<dbReference type="SMR" id="A1SRG6"/>
<dbReference type="STRING" id="357804.Ping_0214"/>
<dbReference type="KEGG" id="pin:Ping_0214"/>
<dbReference type="eggNOG" id="COG3004">
    <property type="taxonomic scope" value="Bacteria"/>
</dbReference>
<dbReference type="HOGENOM" id="CLU_015803_1_2_6"/>
<dbReference type="OrthoDB" id="9808135at2"/>
<dbReference type="Proteomes" id="UP000000639">
    <property type="component" value="Chromosome"/>
</dbReference>
<dbReference type="GO" id="GO:0005886">
    <property type="term" value="C:plasma membrane"/>
    <property type="evidence" value="ECO:0007669"/>
    <property type="project" value="UniProtKB-SubCell"/>
</dbReference>
<dbReference type="GO" id="GO:0015385">
    <property type="term" value="F:sodium:proton antiporter activity"/>
    <property type="evidence" value="ECO:0007669"/>
    <property type="project" value="TreeGrafter"/>
</dbReference>
<dbReference type="GO" id="GO:0006885">
    <property type="term" value="P:regulation of pH"/>
    <property type="evidence" value="ECO:0007669"/>
    <property type="project" value="InterPro"/>
</dbReference>
<dbReference type="Gene3D" id="1.20.1530.10">
    <property type="entry name" value="Na+/H+ antiporter like domain"/>
    <property type="match status" value="1"/>
</dbReference>
<dbReference type="HAMAP" id="MF_01844">
    <property type="entry name" value="NhaA"/>
    <property type="match status" value="1"/>
</dbReference>
<dbReference type="InterPro" id="IPR023171">
    <property type="entry name" value="Na/H_antiporter_dom_sf"/>
</dbReference>
<dbReference type="InterPro" id="IPR004670">
    <property type="entry name" value="NhaA"/>
</dbReference>
<dbReference type="NCBIfam" id="TIGR00773">
    <property type="entry name" value="NhaA"/>
    <property type="match status" value="1"/>
</dbReference>
<dbReference type="PANTHER" id="PTHR30341:SF0">
    <property type="entry name" value="NA(+)_H(+) ANTIPORTER NHAA"/>
    <property type="match status" value="1"/>
</dbReference>
<dbReference type="PANTHER" id="PTHR30341">
    <property type="entry name" value="SODIUM ION/PROTON ANTIPORTER NHAA-RELATED"/>
    <property type="match status" value="1"/>
</dbReference>
<dbReference type="Pfam" id="PF06965">
    <property type="entry name" value="Na_H_antiport_1"/>
    <property type="match status" value="1"/>
</dbReference>
<accession>A1SRG6</accession>
<gene>
    <name evidence="1" type="primary">nhaA1</name>
    <name type="ordered locus">Ping_0214</name>
</gene>
<name>NHAA1_PSYIN</name>
<protein>
    <recommendedName>
        <fullName evidence="1">Na(+)/H(+) antiporter NhaA 1</fullName>
    </recommendedName>
    <alternativeName>
        <fullName evidence="1">Sodium/proton antiporter NhaA 1</fullName>
    </alternativeName>
</protein>